<comment type="function">
    <text evidence="1">Lyase that catalyzes the C1-decarboxylation of 4-hydroxy-3-methoxy-5-(all-trans-polyprenyl)benzoic acid into 2-methoxy-6-(all-trans-polyprenyl)phenol during ubiquinone biosynthesis.</text>
</comment>
<comment type="catalytic activity">
    <reaction evidence="1">
        <text>a 4-hydroxy-3-methoxy-5-(all-trans-polyprenyl)benzoate + H(+) = a 2-methoxy-6-(all-trans-polyprenyl)phenol + CO2</text>
        <dbReference type="Rhea" id="RHEA:81179"/>
        <dbReference type="Rhea" id="RHEA-COMP:9551"/>
        <dbReference type="Rhea" id="RHEA-COMP:10931"/>
        <dbReference type="ChEBI" id="CHEBI:15378"/>
        <dbReference type="ChEBI" id="CHEBI:16526"/>
        <dbReference type="ChEBI" id="CHEBI:62731"/>
        <dbReference type="ChEBI" id="CHEBI:84443"/>
        <dbReference type="EC" id="4.1.1.130"/>
    </reaction>
</comment>
<comment type="cofactor">
    <cofactor evidence="1">
        <name>Zn(2+)</name>
        <dbReference type="ChEBI" id="CHEBI:29105"/>
    </cofactor>
</comment>
<comment type="pathway">
    <text evidence="1">Cofactor biosynthesis; ubiquinone biosynthesis.</text>
</comment>
<comment type="subunit">
    <text evidence="1">Component of a multi-subunit COQ enzyme complex, composed of at least COQ3, COQ4, COQ5, COQ6, COQ7 and COQ9.</text>
</comment>
<comment type="subcellular location">
    <subcellularLocation>
        <location evidence="1">Mitochondrion inner membrane</location>
        <topology evidence="1">Peripheral membrane protein</topology>
        <orientation evidence="1">Matrix side</orientation>
    </subcellularLocation>
</comment>
<comment type="miscellaneous">
    <text evidence="1">This protein may be expected to contain an N-terminal transit peptide but none has been predicted.</text>
</comment>
<comment type="similarity">
    <text evidence="1">Belongs to the COQ4 family.</text>
</comment>
<evidence type="ECO:0000255" key="1">
    <source>
        <dbReference type="HAMAP-Rule" id="MF_03111"/>
    </source>
</evidence>
<keyword id="KW-0456">Lyase</keyword>
<keyword id="KW-0472">Membrane</keyword>
<keyword id="KW-0479">Metal-binding</keyword>
<keyword id="KW-0496">Mitochondrion</keyword>
<keyword id="KW-0999">Mitochondrion inner membrane</keyword>
<keyword id="KW-0831">Ubiquinone biosynthesis</keyword>
<keyword id="KW-0862">Zinc</keyword>
<protein>
    <recommendedName>
        <fullName evidence="1">Ubiquinone biosynthesis protein COQ4, mitochondrial</fullName>
    </recommendedName>
    <alternativeName>
        <fullName>4-hydroxy-3-methoxy-5-polyprenylbenzoate decarboxylase</fullName>
        <ecNumber evidence="1">4.1.1.130</ecNumber>
    </alternativeName>
    <alternativeName>
        <fullName evidence="1">Coenzyme Q biosynthesis protein 4</fullName>
    </alternativeName>
</protein>
<proteinExistence type="inferred from homology"/>
<feature type="chain" id="PRO_0000388091" description="Ubiquinone biosynthesis protein COQ4, mitochondrial">
    <location>
        <begin position="1"/>
        <end position="284"/>
    </location>
</feature>
<feature type="binding site" evidence="1">
    <location>
        <position position="165"/>
    </location>
    <ligand>
        <name>Zn(2+)</name>
        <dbReference type="ChEBI" id="CHEBI:29105"/>
    </ligand>
</feature>
<feature type="binding site" evidence="1">
    <location>
        <position position="166"/>
    </location>
    <ligand>
        <name>Zn(2+)</name>
        <dbReference type="ChEBI" id="CHEBI:29105"/>
    </ligand>
</feature>
<feature type="binding site" evidence="1">
    <location>
        <position position="169"/>
    </location>
    <ligand>
        <name>Zn(2+)</name>
        <dbReference type="ChEBI" id="CHEBI:29105"/>
    </ligand>
</feature>
<feature type="binding site" evidence="1">
    <location>
        <position position="181"/>
    </location>
    <ligand>
        <name>Zn(2+)</name>
        <dbReference type="ChEBI" id="CHEBI:29105"/>
    </ligand>
</feature>
<sequence>MTPAVTQTILTVRIARPHGYGYVLLSRGFSALNRPPPNYPGHIPLTTIERGALAVGSAIGSLLNPRRGDLIAALGEATATPYFIYRLRDAMLSDPTGRRILRDRPRISSKTLSIEYLRSLPPNTVGRTYVGWLDREGVGPDTRAPVQYIDDEECAYVMQRYRECHDFYHAITGLPVVVEGEVALKTFEFANTLLPMTGLSMFAVMRLKPAERERFWKLHLPWAIRSGLASKEVINVYWEEQLERDANELREELGIEKPADLREIRKMMRRQKAAEEAAKAKDGQ</sequence>
<gene>
    <name evidence="1" type="primary">COQ4</name>
    <name type="ORF">BDCG_05943</name>
</gene>
<organism>
    <name type="scientific">Ajellomyces dermatitidis (strain ER-3 / ATCC MYA-2586)</name>
    <name type="common">Blastomyces dermatitidis</name>
    <dbReference type="NCBI Taxonomy" id="559297"/>
    <lineage>
        <taxon>Eukaryota</taxon>
        <taxon>Fungi</taxon>
        <taxon>Dikarya</taxon>
        <taxon>Ascomycota</taxon>
        <taxon>Pezizomycotina</taxon>
        <taxon>Eurotiomycetes</taxon>
        <taxon>Eurotiomycetidae</taxon>
        <taxon>Onygenales</taxon>
        <taxon>Ajellomycetaceae</taxon>
        <taxon>Blastomyces</taxon>
    </lineage>
</organism>
<accession>C5GPP9</accession>
<dbReference type="EC" id="4.1.1.130" evidence="1"/>
<dbReference type="EMBL" id="EQ999978">
    <property type="protein sequence ID" value="EEQ90823.1"/>
    <property type="molecule type" value="Genomic_DNA"/>
</dbReference>
<dbReference type="SMR" id="C5GPP9"/>
<dbReference type="STRING" id="559297.C5GPP9"/>
<dbReference type="VEuPathDB" id="FungiDB:BDCG_05943"/>
<dbReference type="eggNOG" id="KOG3244">
    <property type="taxonomic scope" value="Eukaryota"/>
</dbReference>
<dbReference type="HOGENOM" id="CLU_061241_0_0_1"/>
<dbReference type="OMA" id="YYERHFH"/>
<dbReference type="UniPathway" id="UPA00232"/>
<dbReference type="GO" id="GO:0031314">
    <property type="term" value="C:extrinsic component of mitochondrial inner membrane"/>
    <property type="evidence" value="ECO:0007669"/>
    <property type="project" value="UniProtKB-UniRule"/>
</dbReference>
<dbReference type="GO" id="GO:0006744">
    <property type="term" value="P:ubiquinone biosynthetic process"/>
    <property type="evidence" value="ECO:0007669"/>
    <property type="project" value="UniProtKB-UniRule"/>
</dbReference>
<dbReference type="HAMAP" id="MF_03111">
    <property type="entry name" value="Coq4"/>
    <property type="match status" value="1"/>
</dbReference>
<dbReference type="InterPro" id="IPR007715">
    <property type="entry name" value="Coq4"/>
</dbReference>
<dbReference type="InterPro" id="IPR027540">
    <property type="entry name" value="Coq4_euk"/>
</dbReference>
<dbReference type="PANTHER" id="PTHR12922">
    <property type="entry name" value="UBIQUINONE BIOSYNTHESIS PROTEIN"/>
    <property type="match status" value="1"/>
</dbReference>
<dbReference type="PANTHER" id="PTHR12922:SF7">
    <property type="entry name" value="UBIQUINONE BIOSYNTHESIS PROTEIN COQ4 HOMOLOG, MITOCHONDRIAL"/>
    <property type="match status" value="1"/>
</dbReference>
<dbReference type="Pfam" id="PF05019">
    <property type="entry name" value="Coq4"/>
    <property type="match status" value="1"/>
</dbReference>
<reference key="1">
    <citation type="journal article" date="2015" name="PLoS Genet.">
        <title>The dynamic genome and transcriptome of the human fungal pathogen Blastomyces and close relative Emmonsia.</title>
        <authorList>
            <person name="Munoz J.F."/>
            <person name="Gauthier G.M."/>
            <person name="Desjardins C.A."/>
            <person name="Gallo J.E."/>
            <person name="Holder J."/>
            <person name="Sullivan T.D."/>
            <person name="Marty A.J."/>
            <person name="Carmen J.C."/>
            <person name="Chen Z."/>
            <person name="Ding L."/>
            <person name="Gujja S."/>
            <person name="Magrini V."/>
            <person name="Misas E."/>
            <person name="Mitreva M."/>
            <person name="Priest M."/>
            <person name="Saif S."/>
            <person name="Whiston E.A."/>
            <person name="Young S."/>
            <person name="Zeng Q."/>
            <person name="Goldman W.E."/>
            <person name="Mardis E.R."/>
            <person name="Taylor J.W."/>
            <person name="McEwen J.G."/>
            <person name="Clay O.K."/>
            <person name="Klein B.S."/>
            <person name="Cuomo C.A."/>
        </authorList>
    </citation>
    <scope>NUCLEOTIDE SEQUENCE [LARGE SCALE GENOMIC DNA]</scope>
    <source>
        <strain>ER-3 / ATCC MYA-2586</strain>
    </source>
</reference>
<name>COQ4_AJEDR</name>